<name>YJ026_YEAST</name>
<protein>
    <recommendedName>
        <fullName>Putative uncharacterized protein YJL026C-A</fullName>
    </recommendedName>
</protein>
<dbReference type="EMBL" id="Z49301">
    <property type="status" value="NOT_ANNOTATED_CDS"/>
    <property type="molecule type" value="Genomic_DNA"/>
</dbReference>
<dbReference type="EMBL" id="AF480004">
    <property type="protein sequence ID" value="AAL79317.1"/>
    <property type="molecule type" value="Genomic_DNA"/>
</dbReference>
<dbReference type="SMR" id="Q8TGJ8"/>
<dbReference type="PaxDb" id="4932-YJL026C-A"/>
<dbReference type="TopDownProteomics" id="Q8TGJ8"/>
<dbReference type="EnsemblFungi" id="YJL026C-A_mRNA">
    <property type="protein sequence ID" value="YJL026C-A"/>
    <property type="gene ID" value="YJL026C-A"/>
</dbReference>
<dbReference type="AGR" id="SGD:S000028660"/>
<dbReference type="SGD" id="S000028660">
    <property type="gene designation" value="YJL026C-A"/>
</dbReference>
<dbReference type="eggNOG" id="ENOG502SFS7">
    <property type="taxonomic scope" value="Eukaryota"/>
</dbReference>
<dbReference type="HOGENOM" id="CLU_201365_0_0_1"/>
<dbReference type="OMA" id="KHAKSVC"/>
<evidence type="ECO:0000256" key="1">
    <source>
        <dbReference type="SAM" id="MobiDB-lite"/>
    </source>
</evidence>
<evidence type="ECO:0000305" key="2"/>
<evidence type="ECO:0000305" key="3">
    <source>
    </source>
</evidence>
<feature type="chain" id="PRO_0000299763" description="Putative uncharacterized protein YJL026C-A">
    <location>
        <begin position="1"/>
        <end position="73"/>
    </location>
</feature>
<feature type="region of interest" description="Disordered" evidence="1">
    <location>
        <begin position="48"/>
        <end position="73"/>
    </location>
</feature>
<feature type="compositionally biased region" description="Polar residues" evidence="1">
    <location>
        <begin position="63"/>
        <end position="73"/>
    </location>
</feature>
<gene>
    <name type="ordered locus">YJL026C-A</name>
</gene>
<sequence>MAGSGLFFKWANNKHAKSVCKPSSLQINSLEKVKPGIIPLFFNQKMEAKEPEKKTPSMEAKATSLSPNKASAS</sequence>
<accession>Q8TGJ8</accession>
<organism>
    <name type="scientific">Saccharomyces cerevisiae (strain ATCC 204508 / S288c)</name>
    <name type="common">Baker's yeast</name>
    <dbReference type="NCBI Taxonomy" id="559292"/>
    <lineage>
        <taxon>Eukaryota</taxon>
        <taxon>Fungi</taxon>
        <taxon>Dikarya</taxon>
        <taxon>Ascomycota</taxon>
        <taxon>Saccharomycotina</taxon>
        <taxon>Saccharomycetes</taxon>
        <taxon>Saccharomycetales</taxon>
        <taxon>Saccharomycetaceae</taxon>
        <taxon>Saccharomyces</taxon>
    </lineage>
</organism>
<comment type="miscellaneous">
    <text evidence="2">Completely overlaps RNR2.</text>
</comment>
<comment type="caution">
    <text evidence="3">Product of a dubious gene prediction unlikely to encode a functional protein. Because of that it is not part of the S.cerevisiae S288c complete/reference proteome set.</text>
</comment>
<reference key="1">
    <citation type="journal article" date="1996" name="EMBO J.">
        <title>Complete nucleotide sequence of Saccharomyces cerevisiae chromosome X.</title>
        <authorList>
            <person name="Galibert F."/>
            <person name="Alexandraki D."/>
            <person name="Baur A."/>
            <person name="Boles E."/>
            <person name="Chalwatzis N."/>
            <person name="Chuat J.-C."/>
            <person name="Coster F."/>
            <person name="Cziepluch C."/>
            <person name="de Haan M."/>
            <person name="Domdey H."/>
            <person name="Durand P."/>
            <person name="Entian K.-D."/>
            <person name="Gatius M."/>
            <person name="Goffeau A."/>
            <person name="Grivell L.A."/>
            <person name="Hennemann A."/>
            <person name="Herbert C.J."/>
            <person name="Heumann K."/>
            <person name="Hilger F."/>
            <person name="Hollenberg C.P."/>
            <person name="Huang M.-E."/>
            <person name="Jacq C."/>
            <person name="Jauniaux J.-C."/>
            <person name="Katsoulou C."/>
            <person name="Kirchrath L."/>
            <person name="Kleine K."/>
            <person name="Kordes E."/>
            <person name="Koetter P."/>
            <person name="Liebl S."/>
            <person name="Louis E.J."/>
            <person name="Manus V."/>
            <person name="Mewes H.-W."/>
            <person name="Miosga T."/>
            <person name="Obermaier B."/>
            <person name="Perea J."/>
            <person name="Pohl T.M."/>
            <person name="Portetelle D."/>
            <person name="Pujol A."/>
            <person name="Purnelle B."/>
            <person name="Ramezani Rad M."/>
            <person name="Rasmussen S.W."/>
            <person name="Rose M."/>
            <person name="Rossau R."/>
            <person name="Schaaff-Gerstenschlaeger I."/>
            <person name="Smits P.H.M."/>
            <person name="Scarcez T."/>
            <person name="Soriano N."/>
            <person name="To Van D."/>
            <person name="Tzermia M."/>
            <person name="Van Broekhoven A."/>
            <person name="Vandenbol M."/>
            <person name="Wedler H."/>
            <person name="von Wettstein D."/>
            <person name="Wambutt R."/>
            <person name="Zagulski M."/>
            <person name="Zollner A."/>
            <person name="Karpfinger-Hartl L."/>
        </authorList>
    </citation>
    <scope>NUCLEOTIDE SEQUENCE [LARGE SCALE GENOMIC DNA]</scope>
    <source>
        <strain>ATCC 204508 / S288c</strain>
    </source>
</reference>
<reference key="2">
    <citation type="journal article" date="2014" name="G3 (Bethesda)">
        <title>The reference genome sequence of Saccharomyces cerevisiae: Then and now.</title>
        <authorList>
            <person name="Engel S.R."/>
            <person name="Dietrich F.S."/>
            <person name="Fisk D.G."/>
            <person name="Binkley G."/>
            <person name="Balakrishnan R."/>
            <person name="Costanzo M.C."/>
            <person name="Dwight S.S."/>
            <person name="Hitz B.C."/>
            <person name="Karra K."/>
            <person name="Nash R.S."/>
            <person name="Weng S."/>
            <person name="Wong E.D."/>
            <person name="Lloyd P."/>
            <person name="Skrzypek M.S."/>
            <person name="Miyasato S.R."/>
            <person name="Simison M."/>
            <person name="Cherry J.M."/>
        </authorList>
    </citation>
    <scope>GENOME REANNOTATION</scope>
    <source>
        <strain>ATCC 204508 / S288c</strain>
    </source>
</reference>
<reference key="3">
    <citation type="journal article" date="2002" name="Nat. Biotechnol.">
        <title>An integrated approach for finding overlooked genes in yeast.</title>
        <authorList>
            <person name="Kumar A."/>
            <person name="Harrison P.M."/>
            <person name="Cheung K.-H."/>
            <person name="Lan N."/>
            <person name="Echols N."/>
            <person name="Bertone P."/>
            <person name="Miller P."/>
            <person name="Gerstein M.B."/>
            <person name="Snyder M."/>
        </authorList>
    </citation>
    <scope>NUCLEOTIDE SEQUENCE [GENOMIC DNA]</scope>
</reference>
<proteinExistence type="uncertain"/>